<sequence length="427" mass="48561">MKLQKPKGTQDLLPQDSAKWQYVENFTRSIFKQYNYAEIRTPIFEHYEVISRSVGDTTDIVTKEMYDFYDKGERHITLRPEGTAPVVRSYVENKLFAPEVQKPAKFYYMGPMFRYERPQAGRLRQFHQIGVECFGSNNPATDVETIAMAYHFFEELGIKDIRLHLNSLGNPESRAAYRQALIDYLTPLKEQLSKDSQRRLEENPLRVLDSKEKEDKVAVENAPSILDYLDEESTVHFEAVRSMLDNLGITYTIDTNMVRGLDYYNHTIFEFMTEVGGNDLTICAGGRYDGLVTYFGGPETPAFGFGMGIERLILVLEKQGIELPLDTQLDVYIAVLGQEANGGALDLVQAIRKQGFRAERDYLDRKLKAQFKSADVFGAKAIITLGGSEIESGQVVVKNNQTRSQVETSLEALKTDFASILEELEKQ</sequence>
<proteinExistence type="inferred from homology"/>
<gene>
    <name evidence="1" type="primary">hisS</name>
    <name type="ordered locus">SSU98_0273</name>
</gene>
<feature type="chain" id="PRO_1000016465" description="Histidine--tRNA ligase">
    <location>
        <begin position="1"/>
        <end position="427"/>
    </location>
</feature>
<comment type="catalytic activity">
    <reaction evidence="1">
        <text>tRNA(His) + L-histidine + ATP = L-histidyl-tRNA(His) + AMP + diphosphate + H(+)</text>
        <dbReference type="Rhea" id="RHEA:17313"/>
        <dbReference type="Rhea" id="RHEA-COMP:9665"/>
        <dbReference type="Rhea" id="RHEA-COMP:9689"/>
        <dbReference type="ChEBI" id="CHEBI:15378"/>
        <dbReference type="ChEBI" id="CHEBI:30616"/>
        <dbReference type="ChEBI" id="CHEBI:33019"/>
        <dbReference type="ChEBI" id="CHEBI:57595"/>
        <dbReference type="ChEBI" id="CHEBI:78442"/>
        <dbReference type="ChEBI" id="CHEBI:78527"/>
        <dbReference type="ChEBI" id="CHEBI:456215"/>
        <dbReference type="EC" id="6.1.1.21"/>
    </reaction>
</comment>
<comment type="subunit">
    <text evidence="1">Homodimer.</text>
</comment>
<comment type="subcellular location">
    <subcellularLocation>
        <location evidence="1">Cytoplasm</location>
    </subcellularLocation>
</comment>
<comment type="similarity">
    <text evidence="1">Belongs to the class-II aminoacyl-tRNA synthetase family.</text>
</comment>
<keyword id="KW-0030">Aminoacyl-tRNA synthetase</keyword>
<keyword id="KW-0067">ATP-binding</keyword>
<keyword id="KW-0963">Cytoplasm</keyword>
<keyword id="KW-0436">Ligase</keyword>
<keyword id="KW-0547">Nucleotide-binding</keyword>
<keyword id="KW-0648">Protein biosynthesis</keyword>
<name>SYH_STRS2</name>
<evidence type="ECO:0000255" key="1">
    <source>
        <dbReference type="HAMAP-Rule" id="MF_00127"/>
    </source>
</evidence>
<reference key="1">
    <citation type="journal article" date="2007" name="PLoS ONE">
        <title>A glimpse of streptococcal toxic shock syndrome from comparative genomics of S. suis 2 Chinese isolates.</title>
        <authorList>
            <person name="Chen C."/>
            <person name="Tang J."/>
            <person name="Dong W."/>
            <person name="Wang C."/>
            <person name="Feng Y."/>
            <person name="Wang J."/>
            <person name="Zheng F."/>
            <person name="Pan X."/>
            <person name="Liu D."/>
            <person name="Li M."/>
            <person name="Song Y."/>
            <person name="Zhu X."/>
            <person name="Sun H."/>
            <person name="Feng T."/>
            <person name="Guo Z."/>
            <person name="Ju A."/>
            <person name="Ge J."/>
            <person name="Dong Y."/>
            <person name="Sun W."/>
            <person name="Jiang Y."/>
            <person name="Wang J."/>
            <person name="Yan J."/>
            <person name="Yang H."/>
            <person name="Wang X."/>
            <person name="Gao G.F."/>
            <person name="Yang R."/>
            <person name="Wang J."/>
            <person name="Yu J."/>
        </authorList>
    </citation>
    <scope>NUCLEOTIDE SEQUENCE [LARGE SCALE GENOMIC DNA]</scope>
    <source>
        <strain>98HAH33</strain>
    </source>
</reference>
<organism>
    <name type="scientific">Streptococcus suis (strain 98HAH33)</name>
    <dbReference type="NCBI Taxonomy" id="391296"/>
    <lineage>
        <taxon>Bacteria</taxon>
        <taxon>Bacillati</taxon>
        <taxon>Bacillota</taxon>
        <taxon>Bacilli</taxon>
        <taxon>Lactobacillales</taxon>
        <taxon>Streptococcaceae</taxon>
        <taxon>Streptococcus</taxon>
    </lineage>
</organism>
<dbReference type="EC" id="6.1.1.21" evidence="1"/>
<dbReference type="EMBL" id="CP000408">
    <property type="protein sequence ID" value="ABP91431.1"/>
    <property type="molecule type" value="Genomic_DNA"/>
</dbReference>
<dbReference type="SMR" id="A4VZ92"/>
<dbReference type="KEGG" id="ssv:SSU98_0273"/>
<dbReference type="HOGENOM" id="CLU_025113_1_1_9"/>
<dbReference type="GO" id="GO:0005737">
    <property type="term" value="C:cytoplasm"/>
    <property type="evidence" value="ECO:0007669"/>
    <property type="project" value="UniProtKB-SubCell"/>
</dbReference>
<dbReference type="GO" id="GO:0005524">
    <property type="term" value="F:ATP binding"/>
    <property type="evidence" value="ECO:0007669"/>
    <property type="project" value="UniProtKB-UniRule"/>
</dbReference>
<dbReference type="GO" id="GO:0140096">
    <property type="term" value="F:catalytic activity, acting on a protein"/>
    <property type="evidence" value="ECO:0007669"/>
    <property type="project" value="UniProtKB-ARBA"/>
</dbReference>
<dbReference type="GO" id="GO:0004821">
    <property type="term" value="F:histidine-tRNA ligase activity"/>
    <property type="evidence" value="ECO:0007669"/>
    <property type="project" value="UniProtKB-UniRule"/>
</dbReference>
<dbReference type="GO" id="GO:0016740">
    <property type="term" value="F:transferase activity"/>
    <property type="evidence" value="ECO:0007669"/>
    <property type="project" value="UniProtKB-ARBA"/>
</dbReference>
<dbReference type="GO" id="GO:0006427">
    <property type="term" value="P:histidyl-tRNA aminoacylation"/>
    <property type="evidence" value="ECO:0007669"/>
    <property type="project" value="UniProtKB-UniRule"/>
</dbReference>
<dbReference type="CDD" id="cd00773">
    <property type="entry name" value="HisRS-like_core"/>
    <property type="match status" value="1"/>
</dbReference>
<dbReference type="CDD" id="cd00859">
    <property type="entry name" value="HisRS_anticodon"/>
    <property type="match status" value="1"/>
</dbReference>
<dbReference type="FunFam" id="3.30.930.10:FF:000005">
    <property type="entry name" value="Histidine--tRNA ligase"/>
    <property type="match status" value="1"/>
</dbReference>
<dbReference type="Gene3D" id="3.40.50.800">
    <property type="entry name" value="Anticodon-binding domain"/>
    <property type="match status" value="1"/>
</dbReference>
<dbReference type="Gene3D" id="3.30.930.10">
    <property type="entry name" value="Bira Bifunctional Protein, Domain 2"/>
    <property type="match status" value="1"/>
</dbReference>
<dbReference type="HAMAP" id="MF_00127">
    <property type="entry name" value="His_tRNA_synth"/>
    <property type="match status" value="1"/>
</dbReference>
<dbReference type="InterPro" id="IPR006195">
    <property type="entry name" value="aa-tRNA-synth_II"/>
</dbReference>
<dbReference type="InterPro" id="IPR045864">
    <property type="entry name" value="aa-tRNA-synth_II/BPL/LPL"/>
</dbReference>
<dbReference type="InterPro" id="IPR004154">
    <property type="entry name" value="Anticodon-bd"/>
</dbReference>
<dbReference type="InterPro" id="IPR036621">
    <property type="entry name" value="Anticodon-bd_dom_sf"/>
</dbReference>
<dbReference type="InterPro" id="IPR015807">
    <property type="entry name" value="His-tRNA-ligase"/>
</dbReference>
<dbReference type="InterPro" id="IPR041715">
    <property type="entry name" value="HisRS-like_core"/>
</dbReference>
<dbReference type="InterPro" id="IPR004516">
    <property type="entry name" value="HisRS/HisZ"/>
</dbReference>
<dbReference type="InterPro" id="IPR033656">
    <property type="entry name" value="HisRS_anticodon"/>
</dbReference>
<dbReference type="NCBIfam" id="TIGR00442">
    <property type="entry name" value="hisS"/>
    <property type="match status" value="1"/>
</dbReference>
<dbReference type="PANTHER" id="PTHR43707:SF1">
    <property type="entry name" value="HISTIDINE--TRNA LIGASE, MITOCHONDRIAL-RELATED"/>
    <property type="match status" value="1"/>
</dbReference>
<dbReference type="PANTHER" id="PTHR43707">
    <property type="entry name" value="HISTIDYL-TRNA SYNTHETASE"/>
    <property type="match status" value="1"/>
</dbReference>
<dbReference type="Pfam" id="PF03129">
    <property type="entry name" value="HGTP_anticodon"/>
    <property type="match status" value="1"/>
</dbReference>
<dbReference type="Pfam" id="PF13393">
    <property type="entry name" value="tRNA-synt_His"/>
    <property type="match status" value="1"/>
</dbReference>
<dbReference type="PIRSF" id="PIRSF001549">
    <property type="entry name" value="His-tRNA_synth"/>
    <property type="match status" value="1"/>
</dbReference>
<dbReference type="SUPFAM" id="SSF52954">
    <property type="entry name" value="Class II aaRS ABD-related"/>
    <property type="match status" value="1"/>
</dbReference>
<dbReference type="SUPFAM" id="SSF55681">
    <property type="entry name" value="Class II aaRS and biotin synthetases"/>
    <property type="match status" value="1"/>
</dbReference>
<dbReference type="PROSITE" id="PS50862">
    <property type="entry name" value="AA_TRNA_LIGASE_II"/>
    <property type="match status" value="1"/>
</dbReference>
<accession>A4VZ92</accession>
<protein>
    <recommendedName>
        <fullName evidence="1">Histidine--tRNA ligase</fullName>
        <ecNumber evidence="1">6.1.1.21</ecNumber>
    </recommendedName>
    <alternativeName>
        <fullName evidence="1">Histidyl-tRNA synthetase</fullName>
        <shortName evidence="1">HisRS</shortName>
    </alternativeName>
</protein>